<evidence type="ECO:0000250" key="1"/>
<evidence type="ECO:0000250" key="2">
    <source>
        <dbReference type="UniProtKB" id="P0A9P9"/>
    </source>
</evidence>
<evidence type="ECO:0000255" key="3">
    <source>
        <dbReference type="PROSITE-ProRule" id="PRU10001"/>
    </source>
</evidence>
<evidence type="ECO:0000305" key="4"/>
<evidence type="ECO:0000312" key="5">
    <source>
        <dbReference type="EMBL" id="AAN83789.1"/>
    </source>
</evidence>
<comment type="function">
    <text evidence="2">Catalyzes the reduction of 5-keto-D-gluconate to D-gluconate, using either NADH or NADPH. Is likely involved in an L-idonate degradation pathway that allows E.coli to utilize L-idonate as the sole carbon and energy source. Is also able to catalyze the reverse reaction in vitro, but the D-gluconate oxidation by the enzyme can only proceed with NAD.</text>
</comment>
<comment type="catalytic activity">
    <reaction evidence="2">
        <text>D-gluconate + NAD(+) = 5-dehydro-D-gluconate + NADH + H(+)</text>
        <dbReference type="Rhea" id="RHEA:23940"/>
        <dbReference type="ChEBI" id="CHEBI:15378"/>
        <dbReference type="ChEBI" id="CHEBI:18391"/>
        <dbReference type="ChEBI" id="CHEBI:57540"/>
        <dbReference type="ChEBI" id="CHEBI:57945"/>
        <dbReference type="ChEBI" id="CHEBI:58143"/>
        <dbReference type="EC" id="1.1.1.69"/>
    </reaction>
</comment>
<comment type="catalytic activity">
    <reaction evidence="2">
        <text>D-gluconate + NADP(+) = 5-dehydro-D-gluconate + NADPH + H(+)</text>
        <dbReference type="Rhea" id="RHEA:23936"/>
        <dbReference type="ChEBI" id="CHEBI:15378"/>
        <dbReference type="ChEBI" id="CHEBI:18391"/>
        <dbReference type="ChEBI" id="CHEBI:57783"/>
        <dbReference type="ChEBI" id="CHEBI:58143"/>
        <dbReference type="ChEBI" id="CHEBI:58349"/>
        <dbReference type="EC" id="1.1.1.69"/>
    </reaction>
</comment>
<comment type="pathway">
    <text evidence="2">Carbohydrate acid metabolism; L-idonate degradation.</text>
</comment>
<comment type="similarity">
    <text evidence="4">Belongs to the short-chain dehydrogenases/reductases (SDR) family.</text>
</comment>
<keyword id="KW-0119">Carbohydrate metabolism</keyword>
<keyword id="KW-0520">NAD</keyword>
<keyword id="KW-0521">NADP</keyword>
<keyword id="KW-0560">Oxidoreductase</keyword>
<keyword id="KW-1185">Reference proteome</keyword>
<name>IDNO_ECOL6</name>
<accession>P0A9Q0</accession>
<accession>P39345</accession>
<proteinExistence type="inferred from homology"/>
<dbReference type="EC" id="1.1.1.69" evidence="2"/>
<dbReference type="EMBL" id="AE014075">
    <property type="protein sequence ID" value="AAN83789.1"/>
    <property type="molecule type" value="Genomic_DNA"/>
</dbReference>
<dbReference type="RefSeq" id="WP_000998695.1">
    <property type="nucleotide sequence ID" value="NZ_CP051263.1"/>
</dbReference>
<dbReference type="SMR" id="P0A9Q0"/>
<dbReference type="STRING" id="199310.c5367"/>
<dbReference type="KEGG" id="ecc:c5367"/>
<dbReference type="eggNOG" id="COG1028">
    <property type="taxonomic scope" value="Bacteria"/>
</dbReference>
<dbReference type="HOGENOM" id="CLU_010194_1_1_6"/>
<dbReference type="BioCyc" id="ECOL199310:C5367-MONOMER"/>
<dbReference type="UniPathway" id="UPA00793"/>
<dbReference type="Proteomes" id="UP000001410">
    <property type="component" value="Chromosome"/>
</dbReference>
<dbReference type="GO" id="GO:0008874">
    <property type="term" value="F:gluconate 5-dehydrogenase activity"/>
    <property type="evidence" value="ECO:0007669"/>
    <property type="project" value="UniProtKB-EC"/>
</dbReference>
<dbReference type="GO" id="GO:0046183">
    <property type="term" value="P:L-idonate catabolic process"/>
    <property type="evidence" value="ECO:0007669"/>
    <property type="project" value="UniProtKB-UniPathway"/>
</dbReference>
<dbReference type="CDD" id="cd05347">
    <property type="entry name" value="Ga5DH-like_SDR_c"/>
    <property type="match status" value="1"/>
</dbReference>
<dbReference type="FunFam" id="3.40.50.720:FF:000210">
    <property type="entry name" value="Gluconate 5-dehydrogenase"/>
    <property type="match status" value="1"/>
</dbReference>
<dbReference type="Gene3D" id="3.40.50.720">
    <property type="entry name" value="NAD(P)-binding Rossmann-like Domain"/>
    <property type="match status" value="1"/>
</dbReference>
<dbReference type="InterPro" id="IPR036291">
    <property type="entry name" value="NAD(P)-bd_dom_sf"/>
</dbReference>
<dbReference type="InterPro" id="IPR020904">
    <property type="entry name" value="Sc_DH/Rdtase_CS"/>
</dbReference>
<dbReference type="InterPro" id="IPR002347">
    <property type="entry name" value="SDR_fam"/>
</dbReference>
<dbReference type="NCBIfam" id="NF005559">
    <property type="entry name" value="PRK07231.1"/>
    <property type="match status" value="1"/>
</dbReference>
<dbReference type="NCBIfam" id="NF005983">
    <property type="entry name" value="PRK08085.1"/>
    <property type="match status" value="1"/>
</dbReference>
<dbReference type="PANTHER" id="PTHR43669">
    <property type="entry name" value="5-KETO-D-GLUCONATE 5-REDUCTASE"/>
    <property type="match status" value="1"/>
</dbReference>
<dbReference type="PANTHER" id="PTHR43669:SF9">
    <property type="entry name" value="5-KETO-D-GLUCONATE 5-REDUCTASE"/>
    <property type="match status" value="1"/>
</dbReference>
<dbReference type="Pfam" id="PF00106">
    <property type="entry name" value="adh_short"/>
    <property type="match status" value="1"/>
</dbReference>
<dbReference type="PRINTS" id="PR00081">
    <property type="entry name" value="GDHRDH"/>
</dbReference>
<dbReference type="PRINTS" id="PR00080">
    <property type="entry name" value="SDRFAMILY"/>
</dbReference>
<dbReference type="SUPFAM" id="SSF51735">
    <property type="entry name" value="NAD(P)-binding Rossmann-fold domains"/>
    <property type="match status" value="1"/>
</dbReference>
<dbReference type="PROSITE" id="PS00061">
    <property type="entry name" value="ADH_SHORT"/>
    <property type="match status" value="1"/>
</dbReference>
<gene>
    <name evidence="5" type="primary">idnO</name>
    <name type="ordered locus">c5367</name>
</gene>
<organism>
    <name type="scientific">Escherichia coli O6:H1 (strain CFT073 / ATCC 700928 / UPEC)</name>
    <dbReference type="NCBI Taxonomy" id="199310"/>
    <lineage>
        <taxon>Bacteria</taxon>
        <taxon>Pseudomonadati</taxon>
        <taxon>Pseudomonadota</taxon>
        <taxon>Gammaproteobacteria</taxon>
        <taxon>Enterobacterales</taxon>
        <taxon>Enterobacteriaceae</taxon>
        <taxon>Escherichia</taxon>
    </lineage>
</organism>
<sequence>MNDLFSLAGKNILITGSAQGIGFLLATGLGKYGAQIIINDITAERAELAVEKLHQEGIQAVAAPFNVTHKHEIDAAVEHIEKDIGPIDVLVNNAGIQRRHPFTEFPEQEWNDVIAVNQTAVFLVSQAVTRHMVERKAGKVINICSMQSELGRDTITPYAASKGAVKMLTRGMCVELARHNIQVNGIAPGYFKTEMTKALVEDEAFTAWLCKRTPAARWGDPQELIGAAVFLSSKASDFVNGHLLFVDGGMLVAV</sequence>
<reference key="1">
    <citation type="journal article" date="2002" name="Proc. Natl. Acad. Sci. U.S.A.">
        <title>Extensive mosaic structure revealed by the complete genome sequence of uropathogenic Escherichia coli.</title>
        <authorList>
            <person name="Welch R.A."/>
            <person name="Burland V."/>
            <person name="Plunkett G. III"/>
            <person name="Redford P."/>
            <person name="Roesch P."/>
            <person name="Rasko D."/>
            <person name="Buckles E.L."/>
            <person name="Liou S.-R."/>
            <person name="Boutin A."/>
            <person name="Hackett J."/>
            <person name="Stroud D."/>
            <person name="Mayhew G.F."/>
            <person name="Rose D.J."/>
            <person name="Zhou S."/>
            <person name="Schwartz D.C."/>
            <person name="Perna N.T."/>
            <person name="Mobley H.L.T."/>
            <person name="Donnenberg M.S."/>
            <person name="Blattner F.R."/>
        </authorList>
    </citation>
    <scope>NUCLEOTIDE SEQUENCE [LARGE SCALE GENOMIC DNA]</scope>
    <source>
        <strain>CFT073 / ATCC 700928 / UPEC</strain>
    </source>
</reference>
<protein>
    <recommendedName>
        <fullName evidence="2">5-keto-D-gluconate 5-reductase</fullName>
        <ecNumber evidence="2">1.1.1.69</ecNumber>
    </recommendedName>
</protein>
<feature type="chain" id="PRO_0000054703" description="5-keto-D-gluconate 5-reductase">
    <location>
        <begin position="1"/>
        <end position="254"/>
    </location>
</feature>
<feature type="active site" description="Proton acceptor" evidence="3">
    <location>
        <position position="158"/>
    </location>
</feature>
<feature type="binding site" evidence="1">
    <location>
        <begin position="13"/>
        <end position="37"/>
    </location>
    <ligand>
        <name>NADP(+)</name>
        <dbReference type="ChEBI" id="CHEBI:58349"/>
    </ligand>
</feature>
<feature type="binding site" evidence="1">
    <location>
        <position position="145"/>
    </location>
    <ligand>
        <name>substrate</name>
    </ligand>
</feature>